<feature type="chain" id="PRO_0000085085" description="Catechol 1,2-dioxygenase">
    <location>
        <begin position="1"/>
        <end position="302"/>
    </location>
</feature>
<feature type="binding site" evidence="1">
    <location>
        <position position="164"/>
    </location>
    <ligand>
        <name>Fe cation</name>
        <dbReference type="ChEBI" id="CHEBI:24875"/>
    </ligand>
</feature>
<feature type="binding site" evidence="1">
    <location>
        <position position="198"/>
    </location>
    <ligand>
        <name>Fe cation</name>
        <dbReference type="ChEBI" id="CHEBI:24875"/>
    </ligand>
</feature>
<feature type="binding site" evidence="1">
    <location>
        <position position="222"/>
    </location>
    <ligand>
        <name>Fe cation</name>
        <dbReference type="ChEBI" id="CHEBI:24875"/>
    </ligand>
</feature>
<feature type="binding site" evidence="1">
    <location>
        <position position="224"/>
    </location>
    <ligand>
        <name>Fe cation</name>
        <dbReference type="ChEBI" id="CHEBI:24875"/>
    </ligand>
</feature>
<name>PHEB_PSEUE</name>
<reference key="1">
    <citation type="journal article" date="1991" name="Gene">
        <title>Sequence of the plasmid-encoded catechol 1,2-dioxygenase-expressing gene, pheB, of phenol-degrading Pseudomonas sp. strain EST1001.</title>
        <authorList>
            <person name="Kivisaar M."/>
            <person name="Kasak L."/>
            <person name="Nurk A."/>
        </authorList>
    </citation>
    <scope>NUCLEOTIDE SEQUENCE [GENOMIC DNA]</scope>
</reference>
<sequence>MTVKIYDTPEVQDFLKIVAGLDQEGGNDRGKQIIHRILSDLYRTIDDFDITAEQYWSAVSLLNALGQASQFGLLSPGLGFDHYMDMRMDAADAEAKRTGGTPRTIEGPLYVAGAPEAEGFARMDDDPDTDGETMWLHGQVRDTAGKPIPGAKVEIWHCNSKGGYSFFDKSQTPYNLRRTIIADNEGYYRARSVIPSGYGVPEGAPTDQVLKLLGRHGERPAHIHYFISAPGHQHLTTQINLAGDPYTYDDFAFATRQDLAAEGKRVENHPAAQQYGVEGTVTEVIFNIELSPTAEEELQARP</sequence>
<dbReference type="EC" id="1.13.11.1"/>
<dbReference type="EMBL" id="M57500">
    <property type="protein sequence ID" value="AAC64900.1"/>
    <property type="molecule type" value="Genomic_DNA"/>
</dbReference>
<dbReference type="PIR" id="JN0143">
    <property type="entry name" value="JN0143"/>
</dbReference>
<dbReference type="SMR" id="P31019"/>
<dbReference type="UniPathway" id="UPA00157">
    <property type="reaction ID" value="UER00258"/>
</dbReference>
<dbReference type="GO" id="GO:0018576">
    <property type="term" value="F:catechol 1,2-dioxygenase activity"/>
    <property type="evidence" value="ECO:0007669"/>
    <property type="project" value="UniProtKB-EC"/>
</dbReference>
<dbReference type="GO" id="GO:0008199">
    <property type="term" value="F:ferric iron binding"/>
    <property type="evidence" value="ECO:0007669"/>
    <property type="project" value="InterPro"/>
</dbReference>
<dbReference type="GO" id="GO:0042952">
    <property type="term" value="P:beta-ketoadipate pathway"/>
    <property type="evidence" value="ECO:0007669"/>
    <property type="project" value="UniProtKB-UniPathway"/>
</dbReference>
<dbReference type="GO" id="GO:0019614">
    <property type="term" value="P:catechol-containing compound catabolic process"/>
    <property type="evidence" value="ECO:0007669"/>
    <property type="project" value="InterPro"/>
</dbReference>
<dbReference type="CDD" id="cd03460">
    <property type="entry name" value="1_2-CTD"/>
    <property type="match status" value="1"/>
</dbReference>
<dbReference type="Gene3D" id="2.60.130.10">
    <property type="entry name" value="Aromatic compound dioxygenase"/>
    <property type="match status" value="1"/>
</dbReference>
<dbReference type="InterPro" id="IPR007535">
    <property type="entry name" value="Catechol_dOase_N"/>
</dbReference>
<dbReference type="InterPro" id="IPR012801">
    <property type="entry name" value="Cchol_dOase_prob"/>
</dbReference>
<dbReference type="InterPro" id="IPR000627">
    <property type="entry name" value="Intradiol_dOase_C"/>
</dbReference>
<dbReference type="InterPro" id="IPR015889">
    <property type="entry name" value="Intradiol_dOase_core"/>
</dbReference>
<dbReference type="InterPro" id="IPR050770">
    <property type="entry name" value="Intradiol_RC_Dioxygenase"/>
</dbReference>
<dbReference type="NCBIfam" id="TIGR02439">
    <property type="entry name" value="catechol_proteo"/>
    <property type="match status" value="1"/>
</dbReference>
<dbReference type="PANTHER" id="PTHR33711">
    <property type="entry name" value="DIOXYGENASE, PUTATIVE (AFU_ORTHOLOGUE AFUA_2G02910)-RELATED"/>
    <property type="match status" value="1"/>
</dbReference>
<dbReference type="PANTHER" id="PTHR33711:SF7">
    <property type="entry name" value="INTRADIOL RING-CLEAVAGE DIOXYGENASES DOMAIN-CONTAINING PROTEIN-RELATED"/>
    <property type="match status" value="1"/>
</dbReference>
<dbReference type="Pfam" id="PF00775">
    <property type="entry name" value="Dioxygenase_C"/>
    <property type="match status" value="1"/>
</dbReference>
<dbReference type="Pfam" id="PF04444">
    <property type="entry name" value="Dioxygenase_N"/>
    <property type="match status" value="1"/>
</dbReference>
<dbReference type="SUPFAM" id="SSF49482">
    <property type="entry name" value="Aromatic compound dioxygenase"/>
    <property type="match status" value="1"/>
</dbReference>
<dbReference type="PROSITE" id="PS00083">
    <property type="entry name" value="INTRADIOL_DIOXYGENAS"/>
    <property type="match status" value="1"/>
</dbReference>
<accession>P31019</accession>
<comment type="catalytic activity">
    <reaction>
        <text>catechol + O2 = cis,cis-muconate + 2 H(+)</text>
        <dbReference type="Rhea" id="RHEA:23852"/>
        <dbReference type="ChEBI" id="CHEBI:15378"/>
        <dbReference type="ChEBI" id="CHEBI:15379"/>
        <dbReference type="ChEBI" id="CHEBI:18135"/>
        <dbReference type="ChEBI" id="CHEBI:32379"/>
        <dbReference type="EC" id="1.13.11.1"/>
    </reaction>
</comment>
<comment type="cofactor">
    <cofactor>
        <name>Fe(3+)</name>
        <dbReference type="ChEBI" id="CHEBI:29034"/>
    </cofactor>
    <text>Binds 1 Fe(3+) ion per subunit.</text>
</comment>
<comment type="pathway">
    <text>Aromatic compound metabolism; beta-ketoadipate pathway; 5-oxo-4,5-dihydro-2-furylacetate from catechol: step 1/3.</text>
</comment>
<comment type="similarity">
    <text evidence="2">Belongs to the intradiol ring-cleavage dioxygenase family.</text>
</comment>
<proteinExistence type="inferred from homology"/>
<keyword id="KW-0058">Aromatic hydrocarbons catabolism</keyword>
<keyword id="KW-0223">Dioxygenase</keyword>
<keyword id="KW-0408">Iron</keyword>
<keyword id="KW-0479">Metal-binding</keyword>
<keyword id="KW-0560">Oxidoreductase</keyword>
<keyword id="KW-0614">Plasmid</keyword>
<evidence type="ECO:0000250" key="1"/>
<evidence type="ECO:0000305" key="2"/>
<geneLocation type="plasmid">
    <name>pEST1412</name>
</geneLocation>
<protein>
    <recommendedName>
        <fullName>Catechol 1,2-dioxygenase</fullName>
        <ecNumber>1.13.11.1</ecNumber>
    </recommendedName>
    <alternativeName>
        <fullName>1,2-CTD</fullName>
    </alternativeName>
</protein>
<gene>
    <name type="primary">pheB</name>
</gene>
<organism>
    <name type="scientific">Pseudomonas sp. (strain EST1001)</name>
    <dbReference type="NCBI Taxonomy" id="69012"/>
    <lineage>
        <taxon>Bacteria</taxon>
        <taxon>Pseudomonadati</taxon>
        <taxon>Pseudomonadota</taxon>
    </lineage>
</organism>